<keyword id="KW-0479">Metal-binding</keyword>
<keyword id="KW-0687">Ribonucleoprotein</keyword>
<keyword id="KW-0689">Ribosomal protein</keyword>
<keyword id="KW-0694">RNA-binding</keyword>
<keyword id="KW-0699">rRNA-binding</keyword>
<keyword id="KW-0862">Zinc</keyword>
<name>RS14Z_BACCZ</name>
<evidence type="ECO:0000255" key="1">
    <source>
        <dbReference type="HAMAP-Rule" id="MF_01364"/>
    </source>
</evidence>
<evidence type="ECO:0000305" key="2"/>
<proteinExistence type="inferred from homology"/>
<protein>
    <recommendedName>
        <fullName evidence="1">Small ribosomal subunit protein uS14</fullName>
    </recommendedName>
    <alternativeName>
        <fullName evidence="2">30S ribosomal protein S14 type Z</fullName>
    </alternativeName>
</protein>
<feature type="chain" id="PRO_0000269080" description="Small ribosomal subunit protein uS14">
    <location>
        <begin position="1"/>
        <end position="61"/>
    </location>
</feature>
<feature type="binding site" evidence="1">
    <location>
        <position position="24"/>
    </location>
    <ligand>
        <name>Zn(2+)</name>
        <dbReference type="ChEBI" id="CHEBI:29105"/>
    </ligand>
</feature>
<feature type="binding site" evidence="1">
    <location>
        <position position="27"/>
    </location>
    <ligand>
        <name>Zn(2+)</name>
        <dbReference type="ChEBI" id="CHEBI:29105"/>
    </ligand>
</feature>
<feature type="binding site" evidence="1">
    <location>
        <position position="40"/>
    </location>
    <ligand>
        <name>Zn(2+)</name>
        <dbReference type="ChEBI" id="CHEBI:29105"/>
    </ligand>
</feature>
<feature type="binding site" evidence="1">
    <location>
        <position position="43"/>
    </location>
    <ligand>
        <name>Zn(2+)</name>
        <dbReference type="ChEBI" id="CHEBI:29105"/>
    </ligand>
</feature>
<reference key="1">
    <citation type="journal article" date="2006" name="J. Bacteriol.">
        <title>Pathogenomic sequence analysis of Bacillus cereus and Bacillus thuringiensis isolates closely related to Bacillus anthracis.</title>
        <authorList>
            <person name="Han C.S."/>
            <person name="Xie G."/>
            <person name="Challacombe J.F."/>
            <person name="Altherr M.R."/>
            <person name="Bhotika S.S."/>
            <person name="Bruce D."/>
            <person name="Campbell C.S."/>
            <person name="Campbell M.L."/>
            <person name="Chen J."/>
            <person name="Chertkov O."/>
            <person name="Cleland C."/>
            <person name="Dimitrijevic M."/>
            <person name="Doggett N.A."/>
            <person name="Fawcett J.J."/>
            <person name="Glavina T."/>
            <person name="Goodwin L.A."/>
            <person name="Hill K.K."/>
            <person name="Hitchcock P."/>
            <person name="Jackson P.J."/>
            <person name="Keim P."/>
            <person name="Kewalramani A.R."/>
            <person name="Longmire J."/>
            <person name="Lucas S."/>
            <person name="Malfatti S."/>
            <person name="McMurry K."/>
            <person name="Meincke L.J."/>
            <person name="Misra M."/>
            <person name="Moseman B.L."/>
            <person name="Mundt M."/>
            <person name="Munk A.C."/>
            <person name="Okinaka R.T."/>
            <person name="Parson-Quintana B."/>
            <person name="Reilly L.P."/>
            <person name="Richardson P."/>
            <person name="Robinson D.L."/>
            <person name="Rubin E."/>
            <person name="Saunders E."/>
            <person name="Tapia R."/>
            <person name="Tesmer J.G."/>
            <person name="Thayer N."/>
            <person name="Thompson L.S."/>
            <person name="Tice H."/>
            <person name="Ticknor L.O."/>
            <person name="Wills P.L."/>
            <person name="Brettin T.S."/>
            <person name="Gilna P."/>
        </authorList>
    </citation>
    <scope>NUCLEOTIDE SEQUENCE [LARGE SCALE GENOMIC DNA]</scope>
    <source>
        <strain>ZK / E33L</strain>
    </source>
</reference>
<dbReference type="EMBL" id="CP000001">
    <property type="protein sequence ID" value="AAU20114.1"/>
    <property type="molecule type" value="Genomic_DNA"/>
</dbReference>
<dbReference type="RefSeq" id="WP_001085700.1">
    <property type="nucleotide sequence ID" value="NZ_CP009968.1"/>
</dbReference>
<dbReference type="SMR" id="Q63H77"/>
<dbReference type="GeneID" id="93010930"/>
<dbReference type="KEGG" id="bcz:BCE33L0117"/>
<dbReference type="PATRIC" id="fig|288681.22.peg.34"/>
<dbReference type="Proteomes" id="UP000002612">
    <property type="component" value="Chromosome"/>
</dbReference>
<dbReference type="GO" id="GO:0015935">
    <property type="term" value="C:small ribosomal subunit"/>
    <property type="evidence" value="ECO:0007669"/>
    <property type="project" value="TreeGrafter"/>
</dbReference>
<dbReference type="GO" id="GO:0019843">
    <property type="term" value="F:rRNA binding"/>
    <property type="evidence" value="ECO:0007669"/>
    <property type="project" value="UniProtKB-UniRule"/>
</dbReference>
<dbReference type="GO" id="GO:0003735">
    <property type="term" value="F:structural constituent of ribosome"/>
    <property type="evidence" value="ECO:0007669"/>
    <property type="project" value="InterPro"/>
</dbReference>
<dbReference type="GO" id="GO:0008270">
    <property type="term" value="F:zinc ion binding"/>
    <property type="evidence" value="ECO:0007669"/>
    <property type="project" value="UniProtKB-UniRule"/>
</dbReference>
<dbReference type="GO" id="GO:0006412">
    <property type="term" value="P:translation"/>
    <property type="evidence" value="ECO:0007669"/>
    <property type="project" value="UniProtKB-UniRule"/>
</dbReference>
<dbReference type="FunFam" id="4.10.830.10:FF:000001">
    <property type="entry name" value="30S ribosomal protein S14 type Z"/>
    <property type="match status" value="1"/>
</dbReference>
<dbReference type="Gene3D" id="4.10.830.10">
    <property type="entry name" value="30s Ribosomal Protein S14, Chain N"/>
    <property type="match status" value="1"/>
</dbReference>
<dbReference type="HAMAP" id="MF_01364_B">
    <property type="entry name" value="Ribosomal_uS14_2_B"/>
    <property type="match status" value="1"/>
</dbReference>
<dbReference type="InterPro" id="IPR001209">
    <property type="entry name" value="Ribosomal_uS14"/>
</dbReference>
<dbReference type="InterPro" id="IPR023053">
    <property type="entry name" value="Ribosomal_uS14_bact"/>
</dbReference>
<dbReference type="InterPro" id="IPR018271">
    <property type="entry name" value="Ribosomal_uS14_CS"/>
</dbReference>
<dbReference type="InterPro" id="IPR043140">
    <property type="entry name" value="Ribosomal_uS14_sf"/>
</dbReference>
<dbReference type="NCBIfam" id="NF005974">
    <property type="entry name" value="PRK08061.1"/>
    <property type="match status" value="1"/>
</dbReference>
<dbReference type="PANTHER" id="PTHR19836">
    <property type="entry name" value="30S RIBOSOMAL PROTEIN S14"/>
    <property type="match status" value="1"/>
</dbReference>
<dbReference type="PANTHER" id="PTHR19836:SF26">
    <property type="entry name" value="SMALL RIBOSOMAL SUBUNIT PROTEIN US14B"/>
    <property type="match status" value="1"/>
</dbReference>
<dbReference type="Pfam" id="PF00253">
    <property type="entry name" value="Ribosomal_S14"/>
    <property type="match status" value="1"/>
</dbReference>
<dbReference type="SUPFAM" id="SSF57716">
    <property type="entry name" value="Glucocorticoid receptor-like (DNA-binding domain)"/>
    <property type="match status" value="1"/>
</dbReference>
<dbReference type="PROSITE" id="PS00527">
    <property type="entry name" value="RIBOSOMAL_S14"/>
    <property type="match status" value="1"/>
</dbReference>
<sequence length="61" mass="7296">MAKKSMIAKQKRTPKFKVQEYTRCERCGRPHSVYRKFKLCRICFRELAYKGQIPGVKKASW</sequence>
<accession>Q63H77</accession>
<organism>
    <name type="scientific">Bacillus cereus (strain ZK / E33L)</name>
    <dbReference type="NCBI Taxonomy" id="288681"/>
    <lineage>
        <taxon>Bacteria</taxon>
        <taxon>Bacillati</taxon>
        <taxon>Bacillota</taxon>
        <taxon>Bacilli</taxon>
        <taxon>Bacillales</taxon>
        <taxon>Bacillaceae</taxon>
        <taxon>Bacillus</taxon>
        <taxon>Bacillus cereus group</taxon>
    </lineage>
</organism>
<gene>
    <name evidence="1" type="primary">rpsZ</name>
    <name evidence="1" type="synonym">rpsN</name>
    <name type="ordered locus">BCE33L0117</name>
</gene>
<comment type="function">
    <text evidence="1">Binds 16S rRNA, required for the assembly of 30S particles and may also be responsible for determining the conformation of the 16S rRNA at the A site.</text>
</comment>
<comment type="cofactor">
    <cofactor evidence="1">
        <name>Zn(2+)</name>
        <dbReference type="ChEBI" id="CHEBI:29105"/>
    </cofactor>
    <text evidence="1">Binds 1 zinc ion per subunit.</text>
</comment>
<comment type="subunit">
    <text evidence="1">Part of the 30S ribosomal subunit. Contacts proteins S3 and S10.</text>
</comment>
<comment type="similarity">
    <text evidence="1">Belongs to the universal ribosomal protein uS14 family. Zinc-binding uS14 subfamily.</text>
</comment>